<dbReference type="EC" id="2.7.1.33" evidence="1"/>
<dbReference type="EMBL" id="CP000453">
    <property type="protein sequence ID" value="ABI55795.1"/>
    <property type="status" value="ALT_INIT"/>
    <property type="molecule type" value="Genomic_DNA"/>
</dbReference>
<dbReference type="RefSeq" id="WP_049753505.1">
    <property type="nucleotide sequence ID" value="NC_008340.1"/>
</dbReference>
<dbReference type="SMR" id="Q0ABJ2"/>
<dbReference type="KEGG" id="aeh:Mlg_0441"/>
<dbReference type="eggNOG" id="COG1521">
    <property type="taxonomic scope" value="Bacteria"/>
</dbReference>
<dbReference type="HOGENOM" id="CLU_066627_0_0_6"/>
<dbReference type="UniPathway" id="UPA00241">
    <property type="reaction ID" value="UER00352"/>
</dbReference>
<dbReference type="Proteomes" id="UP000001962">
    <property type="component" value="Chromosome"/>
</dbReference>
<dbReference type="GO" id="GO:0005737">
    <property type="term" value="C:cytoplasm"/>
    <property type="evidence" value="ECO:0007669"/>
    <property type="project" value="UniProtKB-SubCell"/>
</dbReference>
<dbReference type="GO" id="GO:0005524">
    <property type="term" value="F:ATP binding"/>
    <property type="evidence" value="ECO:0007669"/>
    <property type="project" value="UniProtKB-UniRule"/>
</dbReference>
<dbReference type="GO" id="GO:0046872">
    <property type="term" value="F:metal ion binding"/>
    <property type="evidence" value="ECO:0007669"/>
    <property type="project" value="UniProtKB-KW"/>
</dbReference>
<dbReference type="GO" id="GO:0004594">
    <property type="term" value="F:pantothenate kinase activity"/>
    <property type="evidence" value="ECO:0007669"/>
    <property type="project" value="UniProtKB-UniRule"/>
</dbReference>
<dbReference type="GO" id="GO:0015937">
    <property type="term" value="P:coenzyme A biosynthetic process"/>
    <property type="evidence" value="ECO:0007669"/>
    <property type="project" value="UniProtKB-UniRule"/>
</dbReference>
<dbReference type="CDD" id="cd24015">
    <property type="entry name" value="ASKHA_NBD_PanK-III"/>
    <property type="match status" value="1"/>
</dbReference>
<dbReference type="Gene3D" id="3.30.420.40">
    <property type="match status" value="2"/>
</dbReference>
<dbReference type="HAMAP" id="MF_01274">
    <property type="entry name" value="Pantothen_kinase_3"/>
    <property type="match status" value="1"/>
</dbReference>
<dbReference type="InterPro" id="IPR043129">
    <property type="entry name" value="ATPase_NBD"/>
</dbReference>
<dbReference type="InterPro" id="IPR004619">
    <property type="entry name" value="Type_III_PanK"/>
</dbReference>
<dbReference type="NCBIfam" id="TIGR00671">
    <property type="entry name" value="baf"/>
    <property type="match status" value="1"/>
</dbReference>
<dbReference type="NCBIfam" id="NF009860">
    <property type="entry name" value="PRK13322.1-5"/>
    <property type="match status" value="1"/>
</dbReference>
<dbReference type="PANTHER" id="PTHR34265">
    <property type="entry name" value="TYPE III PANTOTHENATE KINASE"/>
    <property type="match status" value="1"/>
</dbReference>
<dbReference type="PANTHER" id="PTHR34265:SF1">
    <property type="entry name" value="TYPE III PANTOTHENATE KINASE"/>
    <property type="match status" value="1"/>
</dbReference>
<dbReference type="Pfam" id="PF03309">
    <property type="entry name" value="Pan_kinase"/>
    <property type="match status" value="1"/>
</dbReference>
<dbReference type="SUPFAM" id="SSF53067">
    <property type="entry name" value="Actin-like ATPase domain"/>
    <property type="match status" value="2"/>
</dbReference>
<organism>
    <name type="scientific">Alkalilimnicola ehrlichii (strain ATCC BAA-1101 / DSM 17681 / MLHE-1)</name>
    <dbReference type="NCBI Taxonomy" id="187272"/>
    <lineage>
        <taxon>Bacteria</taxon>
        <taxon>Pseudomonadati</taxon>
        <taxon>Pseudomonadota</taxon>
        <taxon>Gammaproteobacteria</taxon>
        <taxon>Chromatiales</taxon>
        <taxon>Ectothiorhodospiraceae</taxon>
        <taxon>Alkalilimnicola</taxon>
    </lineage>
</organism>
<keyword id="KW-0067">ATP-binding</keyword>
<keyword id="KW-0173">Coenzyme A biosynthesis</keyword>
<keyword id="KW-0963">Cytoplasm</keyword>
<keyword id="KW-0418">Kinase</keyword>
<keyword id="KW-0479">Metal-binding</keyword>
<keyword id="KW-0547">Nucleotide-binding</keyword>
<keyword id="KW-0630">Potassium</keyword>
<keyword id="KW-1185">Reference proteome</keyword>
<keyword id="KW-0808">Transferase</keyword>
<feature type="chain" id="PRO_0000270856" description="Type III pantothenate kinase">
    <location>
        <begin position="1"/>
        <end position="249"/>
    </location>
</feature>
<feature type="active site" description="Proton acceptor" evidence="1">
    <location>
        <position position="104"/>
    </location>
</feature>
<feature type="binding site" evidence="1">
    <location>
        <begin position="8"/>
        <end position="15"/>
    </location>
    <ligand>
        <name>ATP</name>
        <dbReference type="ChEBI" id="CHEBI:30616"/>
    </ligand>
</feature>
<feature type="binding site" evidence="1">
    <location>
        <position position="95"/>
    </location>
    <ligand>
        <name>substrate</name>
    </ligand>
</feature>
<feature type="binding site" evidence="1">
    <location>
        <begin position="102"/>
        <end position="105"/>
    </location>
    <ligand>
        <name>substrate</name>
    </ligand>
</feature>
<feature type="binding site" evidence="1">
    <location>
        <position position="125"/>
    </location>
    <ligand>
        <name>K(+)</name>
        <dbReference type="ChEBI" id="CHEBI:29103"/>
    </ligand>
</feature>
<feature type="binding site" evidence="1">
    <location>
        <position position="128"/>
    </location>
    <ligand>
        <name>ATP</name>
        <dbReference type="ChEBI" id="CHEBI:30616"/>
    </ligand>
</feature>
<feature type="binding site" evidence="1">
    <location>
        <position position="179"/>
    </location>
    <ligand>
        <name>substrate</name>
    </ligand>
</feature>
<protein>
    <recommendedName>
        <fullName evidence="1">Type III pantothenate kinase</fullName>
        <ecNumber evidence="1">2.7.1.33</ecNumber>
    </recommendedName>
    <alternativeName>
        <fullName evidence="1">PanK-III</fullName>
    </alternativeName>
    <alternativeName>
        <fullName evidence="1">Pantothenic acid kinase</fullName>
    </alternativeName>
</protein>
<comment type="function">
    <text evidence="1">Catalyzes the phosphorylation of pantothenate (Pan), the first step in CoA biosynthesis.</text>
</comment>
<comment type="catalytic activity">
    <reaction evidence="1">
        <text>(R)-pantothenate + ATP = (R)-4'-phosphopantothenate + ADP + H(+)</text>
        <dbReference type="Rhea" id="RHEA:16373"/>
        <dbReference type="ChEBI" id="CHEBI:10986"/>
        <dbReference type="ChEBI" id="CHEBI:15378"/>
        <dbReference type="ChEBI" id="CHEBI:29032"/>
        <dbReference type="ChEBI" id="CHEBI:30616"/>
        <dbReference type="ChEBI" id="CHEBI:456216"/>
        <dbReference type="EC" id="2.7.1.33"/>
    </reaction>
</comment>
<comment type="cofactor">
    <cofactor evidence="1">
        <name>NH4(+)</name>
        <dbReference type="ChEBI" id="CHEBI:28938"/>
    </cofactor>
    <cofactor evidence="1">
        <name>K(+)</name>
        <dbReference type="ChEBI" id="CHEBI:29103"/>
    </cofactor>
    <text evidence="1">A monovalent cation. Ammonium or potassium.</text>
</comment>
<comment type="pathway">
    <text evidence="1">Cofactor biosynthesis; coenzyme A biosynthesis; CoA from (R)-pantothenate: step 1/5.</text>
</comment>
<comment type="subunit">
    <text evidence="1">Homodimer.</text>
</comment>
<comment type="subcellular location">
    <subcellularLocation>
        <location evidence="1">Cytoplasm</location>
    </subcellularLocation>
</comment>
<comment type="similarity">
    <text evidence="1">Belongs to the type III pantothenate kinase family.</text>
</comment>
<comment type="sequence caution" evidence="2">
    <conflict type="erroneous initiation">
        <sequence resource="EMBL-CDS" id="ABI55795"/>
    </conflict>
</comment>
<proteinExistence type="inferred from homology"/>
<sequence>MPHWLILDAGNSRLKFGLWDGHRVHATGAVSWSGDWPGELDMALAAMARPERVVVGSVHQTATVEALEAISRRRWGCPLTRITTTAAACGVQNGYRDYRQLGVDRWAAVVAAHLRAPEAWHLVIDVGTAATVDVVGPRGDYRGGAIFPGLRLLADALGSGTAGLPSLAGEAVPLPARSTPDAIRGGVVHGLAGALRHLASEMLPAEAVRPRRWLTGGDAGRLQPLLPQGAVWAPDLVLEGLAQLARESG</sequence>
<accession>Q0ABJ2</accession>
<gene>
    <name evidence="1" type="primary">coaX</name>
    <name type="ordered locus">Mlg_0441</name>
</gene>
<reference key="1">
    <citation type="submission" date="2006-08" db="EMBL/GenBank/DDBJ databases">
        <title>Complete sequence of Alkalilimnicola ehrilichei MLHE-1.</title>
        <authorList>
            <person name="Copeland A."/>
            <person name="Lucas S."/>
            <person name="Lapidus A."/>
            <person name="Barry K."/>
            <person name="Detter J.C."/>
            <person name="Glavina del Rio T."/>
            <person name="Hammon N."/>
            <person name="Israni S."/>
            <person name="Dalin E."/>
            <person name="Tice H."/>
            <person name="Pitluck S."/>
            <person name="Sims D."/>
            <person name="Brettin T."/>
            <person name="Bruce D."/>
            <person name="Han C."/>
            <person name="Tapia R."/>
            <person name="Gilna P."/>
            <person name="Schmutz J."/>
            <person name="Larimer F."/>
            <person name="Land M."/>
            <person name="Hauser L."/>
            <person name="Kyrpides N."/>
            <person name="Mikhailova N."/>
            <person name="Oremland R.S."/>
            <person name="Hoeft S.E."/>
            <person name="Switzer-Blum J."/>
            <person name="Kulp T."/>
            <person name="King G."/>
            <person name="Tabita R."/>
            <person name="Witte B."/>
            <person name="Santini J.M."/>
            <person name="Basu P."/>
            <person name="Hollibaugh J.T."/>
            <person name="Xie G."/>
            <person name="Stolz J.F."/>
            <person name="Richardson P."/>
        </authorList>
    </citation>
    <scope>NUCLEOTIDE SEQUENCE [LARGE SCALE GENOMIC DNA]</scope>
    <source>
        <strain>ATCC BAA-1101 / DSM 17681 / MLHE-1</strain>
    </source>
</reference>
<evidence type="ECO:0000255" key="1">
    <source>
        <dbReference type="HAMAP-Rule" id="MF_01274"/>
    </source>
</evidence>
<evidence type="ECO:0000305" key="2"/>
<name>COAX_ALKEH</name>